<feature type="chain" id="PRO_0000126048" description="Spore coat protein P">
    <location>
        <begin position="1"/>
        <end position="143"/>
    </location>
</feature>
<feature type="domain" description="sHSP" evidence="1">
    <location>
        <begin position="34"/>
        <end position="143"/>
    </location>
</feature>
<keyword id="KW-1185">Reference proteome</keyword>
<keyword id="KW-0749">Sporulation</keyword>
<evidence type="ECO:0000255" key="1">
    <source>
        <dbReference type="PROSITE-ProRule" id="PRU00285"/>
    </source>
</evidence>
<evidence type="ECO:0000269" key="2">
    <source>
    </source>
</evidence>
<organism>
    <name type="scientific">Bacillus subtilis (strain 168)</name>
    <dbReference type="NCBI Taxonomy" id="224308"/>
    <lineage>
        <taxon>Bacteria</taxon>
        <taxon>Bacillati</taxon>
        <taxon>Bacillota</taxon>
        <taxon>Bacilli</taxon>
        <taxon>Bacillales</taxon>
        <taxon>Bacillaceae</taxon>
        <taxon>Bacillus</taxon>
    </lineage>
</organism>
<gene>
    <name type="primary">cotP</name>
    <name type="synonym">ydfT</name>
    <name type="ordered locus">BSU05550</name>
</gene>
<name>COTP_BACSU</name>
<protein>
    <recommendedName>
        <fullName>Spore coat protein P</fullName>
    </recommendedName>
</protein>
<accession>P96698</accession>
<comment type="induction">
    <text evidence="2">Induced late during sporulation by the sporulation-specific sigma factor sigma-K and negatively regulated by GerE.</text>
</comment>
<comment type="similarity">
    <text evidence="1">Belongs to the small heat shock protein (HSP20) family.</text>
</comment>
<proteinExistence type="evidence at transcript level"/>
<reference key="1">
    <citation type="submission" date="1997-03" db="EMBL/GenBank/DDBJ databases">
        <title>A 148 kbp sequence of the region between 35 and 47 degree of the Bacillus subtilis genome.</title>
        <authorList>
            <person name="Kasahara Y."/>
            <person name="Nakai S."/>
            <person name="Lee S."/>
            <person name="Sadaie Y."/>
            <person name="Ogasawara N."/>
        </authorList>
    </citation>
    <scope>NUCLEOTIDE SEQUENCE [GENOMIC DNA]</scope>
    <source>
        <strain>168</strain>
    </source>
</reference>
<reference key="2">
    <citation type="journal article" date="1997" name="Nature">
        <title>The complete genome sequence of the Gram-positive bacterium Bacillus subtilis.</title>
        <authorList>
            <person name="Kunst F."/>
            <person name="Ogasawara N."/>
            <person name="Moszer I."/>
            <person name="Albertini A.M."/>
            <person name="Alloni G."/>
            <person name="Azevedo V."/>
            <person name="Bertero M.G."/>
            <person name="Bessieres P."/>
            <person name="Bolotin A."/>
            <person name="Borchert S."/>
            <person name="Borriss R."/>
            <person name="Boursier L."/>
            <person name="Brans A."/>
            <person name="Braun M."/>
            <person name="Brignell S.C."/>
            <person name="Bron S."/>
            <person name="Brouillet S."/>
            <person name="Bruschi C.V."/>
            <person name="Caldwell B."/>
            <person name="Capuano V."/>
            <person name="Carter N.M."/>
            <person name="Choi S.-K."/>
            <person name="Codani J.-J."/>
            <person name="Connerton I.F."/>
            <person name="Cummings N.J."/>
            <person name="Daniel R.A."/>
            <person name="Denizot F."/>
            <person name="Devine K.M."/>
            <person name="Duesterhoeft A."/>
            <person name="Ehrlich S.D."/>
            <person name="Emmerson P.T."/>
            <person name="Entian K.-D."/>
            <person name="Errington J."/>
            <person name="Fabret C."/>
            <person name="Ferrari E."/>
            <person name="Foulger D."/>
            <person name="Fritz C."/>
            <person name="Fujita M."/>
            <person name="Fujita Y."/>
            <person name="Fuma S."/>
            <person name="Galizzi A."/>
            <person name="Galleron N."/>
            <person name="Ghim S.-Y."/>
            <person name="Glaser P."/>
            <person name="Goffeau A."/>
            <person name="Golightly E.J."/>
            <person name="Grandi G."/>
            <person name="Guiseppi G."/>
            <person name="Guy B.J."/>
            <person name="Haga K."/>
            <person name="Haiech J."/>
            <person name="Harwood C.R."/>
            <person name="Henaut A."/>
            <person name="Hilbert H."/>
            <person name="Holsappel S."/>
            <person name="Hosono S."/>
            <person name="Hullo M.-F."/>
            <person name="Itaya M."/>
            <person name="Jones L.-M."/>
            <person name="Joris B."/>
            <person name="Karamata D."/>
            <person name="Kasahara Y."/>
            <person name="Klaerr-Blanchard M."/>
            <person name="Klein C."/>
            <person name="Kobayashi Y."/>
            <person name="Koetter P."/>
            <person name="Koningstein G."/>
            <person name="Krogh S."/>
            <person name="Kumano M."/>
            <person name="Kurita K."/>
            <person name="Lapidus A."/>
            <person name="Lardinois S."/>
            <person name="Lauber J."/>
            <person name="Lazarevic V."/>
            <person name="Lee S.-M."/>
            <person name="Levine A."/>
            <person name="Liu H."/>
            <person name="Masuda S."/>
            <person name="Mauel C."/>
            <person name="Medigue C."/>
            <person name="Medina N."/>
            <person name="Mellado R.P."/>
            <person name="Mizuno M."/>
            <person name="Moestl D."/>
            <person name="Nakai S."/>
            <person name="Noback M."/>
            <person name="Noone D."/>
            <person name="O'Reilly M."/>
            <person name="Ogawa K."/>
            <person name="Ogiwara A."/>
            <person name="Oudega B."/>
            <person name="Park S.-H."/>
            <person name="Parro V."/>
            <person name="Pohl T.M."/>
            <person name="Portetelle D."/>
            <person name="Porwollik S."/>
            <person name="Prescott A.M."/>
            <person name="Presecan E."/>
            <person name="Pujic P."/>
            <person name="Purnelle B."/>
            <person name="Rapoport G."/>
            <person name="Rey M."/>
            <person name="Reynolds S."/>
            <person name="Rieger M."/>
            <person name="Rivolta C."/>
            <person name="Rocha E."/>
            <person name="Roche B."/>
            <person name="Rose M."/>
            <person name="Sadaie Y."/>
            <person name="Sato T."/>
            <person name="Scanlan E."/>
            <person name="Schleich S."/>
            <person name="Schroeter R."/>
            <person name="Scoffone F."/>
            <person name="Sekiguchi J."/>
            <person name="Sekowska A."/>
            <person name="Seror S.J."/>
            <person name="Serror P."/>
            <person name="Shin B.-S."/>
            <person name="Soldo B."/>
            <person name="Sorokin A."/>
            <person name="Tacconi E."/>
            <person name="Takagi T."/>
            <person name="Takahashi H."/>
            <person name="Takemaru K."/>
            <person name="Takeuchi M."/>
            <person name="Tamakoshi A."/>
            <person name="Tanaka T."/>
            <person name="Terpstra P."/>
            <person name="Tognoni A."/>
            <person name="Tosato V."/>
            <person name="Uchiyama S."/>
            <person name="Vandenbol M."/>
            <person name="Vannier F."/>
            <person name="Vassarotti A."/>
            <person name="Viari A."/>
            <person name="Wambutt R."/>
            <person name="Wedler E."/>
            <person name="Wedler H."/>
            <person name="Weitzenegger T."/>
            <person name="Winters P."/>
            <person name="Wipat A."/>
            <person name="Yamamoto H."/>
            <person name="Yamane K."/>
            <person name="Yasumoto K."/>
            <person name="Yata K."/>
            <person name="Yoshida K."/>
            <person name="Yoshikawa H.-F."/>
            <person name="Zumstein E."/>
            <person name="Yoshikawa H."/>
            <person name="Danchin A."/>
        </authorList>
    </citation>
    <scope>NUCLEOTIDE SEQUENCE [LARGE SCALE GENOMIC DNA]</scope>
    <source>
        <strain>168</strain>
    </source>
</reference>
<reference key="3">
    <citation type="journal article" date="2001" name="FEMS Microbiol. Lett.">
        <title>Transcriptional analysis of three Bacillus subtilis genes coding for proteins with the alpha-crystallin domain characteristic of small heat shock proteins.</title>
        <authorList>
            <person name="Reischl S."/>
            <person name="Thake S."/>
            <person name="Homuth G."/>
            <person name="Schumann W."/>
        </authorList>
    </citation>
    <scope>TRANSCRIPTIONAL REGULATION</scope>
</reference>
<sequence>MDFEKIRKWLEITNEYKQSDFWTNVLKYKAPEHFFDSEASTFVYDFYQDEEYNFIIVEMPGVYEEELTIRLLSKTQLLIKGTITPVFPAEMEVLRERYYGEIERIIQLPEAAETHLLQIQLLNGLLHISYPRQVETVAFNKGL</sequence>
<dbReference type="EMBL" id="AB001488">
    <property type="protein sequence ID" value="BAA19388.1"/>
    <property type="molecule type" value="Genomic_DNA"/>
</dbReference>
<dbReference type="EMBL" id="AL009126">
    <property type="protein sequence ID" value="CAB12362.1"/>
    <property type="molecule type" value="Genomic_DNA"/>
</dbReference>
<dbReference type="PIR" id="B69782">
    <property type="entry name" value="B69782"/>
</dbReference>
<dbReference type="RefSeq" id="NP_388436.1">
    <property type="nucleotide sequence ID" value="NC_000964.3"/>
</dbReference>
<dbReference type="RefSeq" id="WP_003234154.1">
    <property type="nucleotide sequence ID" value="NZ_OZ025638.1"/>
</dbReference>
<dbReference type="SMR" id="P96698"/>
<dbReference type="FunCoup" id="P96698">
    <property type="interactions" value="56"/>
</dbReference>
<dbReference type="STRING" id="224308.BSU05550"/>
<dbReference type="PaxDb" id="224308-BSU05550"/>
<dbReference type="EnsemblBacteria" id="CAB12362">
    <property type="protein sequence ID" value="CAB12362"/>
    <property type="gene ID" value="BSU_05550"/>
</dbReference>
<dbReference type="GeneID" id="938073"/>
<dbReference type="KEGG" id="bsu:BSU05550"/>
<dbReference type="PATRIC" id="fig|224308.179.peg.597"/>
<dbReference type="eggNOG" id="COG0071">
    <property type="taxonomic scope" value="Bacteria"/>
</dbReference>
<dbReference type="InParanoid" id="P96698"/>
<dbReference type="OrthoDB" id="9811615at2"/>
<dbReference type="BioCyc" id="BSUB:BSU05550-MONOMER"/>
<dbReference type="Proteomes" id="UP000001570">
    <property type="component" value="Chromosome"/>
</dbReference>
<dbReference type="GO" id="GO:0051082">
    <property type="term" value="F:unfolded protein binding"/>
    <property type="evidence" value="ECO:0000318"/>
    <property type="project" value="GO_Central"/>
</dbReference>
<dbReference type="GO" id="GO:0051259">
    <property type="term" value="P:protein complex oligomerization"/>
    <property type="evidence" value="ECO:0000318"/>
    <property type="project" value="GO_Central"/>
</dbReference>
<dbReference type="GO" id="GO:0006457">
    <property type="term" value="P:protein folding"/>
    <property type="evidence" value="ECO:0000318"/>
    <property type="project" value="GO_Central"/>
</dbReference>
<dbReference type="GO" id="GO:0009408">
    <property type="term" value="P:response to heat"/>
    <property type="evidence" value="ECO:0000318"/>
    <property type="project" value="GO_Central"/>
</dbReference>
<dbReference type="GO" id="GO:0042542">
    <property type="term" value="P:response to hydrogen peroxide"/>
    <property type="evidence" value="ECO:0000318"/>
    <property type="project" value="GO_Central"/>
</dbReference>
<dbReference type="GO" id="GO:0009651">
    <property type="term" value="P:response to salt stress"/>
    <property type="evidence" value="ECO:0000318"/>
    <property type="project" value="GO_Central"/>
</dbReference>
<dbReference type="GO" id="GO:0030435">
    <property type="term" value="P:sporulation resulting in formation of a cellular spore"/>
    <property type="evidence" value="ECO:0007669"/>
    <property type="project" value="UniProtKB-KW"/>
</dbReference>
<dbReference type="CDD" id="cd06464">
    <property type="entry name" value="ACD_sHsps-like"/>
    <property type="match status" value="1"/>
</dbReference>
<dbReference type="Gene3D" id="2.60.40.790">
    <property type="match status" value="1"/>
</dbReference>
<dbReference type="InterPro" id="IPR002068">
    <property type="entry name" value="A-crystallin/Hsp20_dom"/>
</dbReference>
<dbReference type="InterPro" id="IPR008978">
    <property type="entry name" value="HSP20-like_chaperone"/>
</dbReference>
<dbReference type="Pfam" id="PF00011">
    <property type="entry name" value="HSP20"/>
    <property type="match status" value="1"/>
</dbReference>
<dbReference type="SUPFAM" id="SSF49764">
    <property type="entry name" value="HSP20-like chaperones"/>
    <property type="match status" value="1"/>
</dbReference>
<dbReference type="PROSITE" id="PS01031">
    <property type="entry name" value="SHSP"/>
    <property type="match status" value="1"/>
</dbReference>